<sequence length="326" mass="37293">MSQYVVCALYKFVELENYQELREPLLALMEAHGVHGTLLLASEGINGTVAAKREGIDTLLAWLNDEPRLNGIVYKESYSDTQPFNRTKVKLKKEIVTLGVEGIDPRHVVGTYVKPQDWNDLIADPEVFVVDTRNDYEIEIGTFKGAVNPNTDTFREFPDYVKQNMDPEKHKKVAMFCTGGIRCEKSTAYMKEQGFDEVYHLEGGILKYLEEVPEEESMWEGDCYVFDGRVAVNHQLEKADYDLCNACRLPITEEDKRSEQFEQGVSCPKCFGKHSEEQVARFREREKQVSLAAVRGEQHVGGESAKQRQQRRAEKLAKKDVQRKQA</sequence>
<proteinExistence type="inferred from homology"/>
<keyword id="KW-0560">Oxidoreductase</keyword>
<keyword id="KW-0819">tRNA processing</keyword>
<name>TRHO_VIBC1</name>
<protein>
    <recommendedName>
        <fullName evidence="1">tRNA uridine(34) hydroxylase</fullName>
        <ecNumber evidence="1">1.14.-.-</ecNumber>
    </recommendedName>
    <alternativeName>
        <fullName evidence="1">tRNA hydroxylation protein O</fullName>
    </alternativeName>
</protein>
<gene>
    <name evidence="1" type="primary">trhO</name>
    <name type="ordered locus">VIBHAR_06657</name>
</gene>
<organism>
    <name type="scientific">Vibrio campbellii (strain ATCC BAA-1116)</name>
    <dbReference type="NCBI Taxonomy" id="2902295"/>
    <lineage>
        <taxon>Bacteria</taxon>
        <taxon>Pseudomonadati</taxon>
        <taxon>Pseudomonadota</taxon>
        <taxon>Gammaproteobacteria</taxon>
        <taxon>Vibrionales</taxon>
        <taxon>Vibrionaceae</taxon>
        <taxon>Vibrio</taxon>
    </lineage>
</organism>
<evidence type="ECO:0000255" key="1">
    <source>
        <dbReference type="HAMAP-Rule" id="MF_00469"/>
    </source>
</evidence>
<evidence type="ECO:0000256" key="2">
    <source>
        <dbReference type="SAM" id="MobiDB-lite"/>
    </source>
</evidence>
<accession>A7N721</accession>
<dbReference type="EC" id="1.14.-.-" evidence="1"/>
<dbReference type="EMBL" id="CP000790">
    <property type="protein sequence ID" value="ABU74544.1"/>
    <property type="molecule type" value="Genomic_DNA"/>
</dbReference>
<dbReference type="RefSeq" id="WP_012130056.1">
    <property type="nucleotide sequence ID" value="NC_009784.1"/>
</dbReference>
<dbReference type="SMR" id="A7N721"/>
<dbReference type="KEGG" id="vha:VIBHAR_06657"/>
<dbReference type="PATRIC" id="fig|338187.25.peg.3748"/>
<dbReference type="Proteomes" id="UP000008152">
    <property type="component" value="Chromosome II"/>
</dbReference>
<dbReference type="GO" id="GO:0016705">
    <property type="term" value="F:oxidoreductase activity, acting on paired donors, with incorporation or reduction of molecular oxygen"/>
    <property type="evidence" value="ECO:0007669"/>
    <property type="project" value="UniProtKB-UniRule"/>
</dbReference>
<dbReference type="GO" id="GO:0006400">
    <property type="term" value="P:tRNA modification"/>
    <property type="evidence" value="ECO:0007669"/>
    <property type="project" value="UniProtKB-UniRule"/>
</dbReference>
<dbReference type="CDD" id="cd01518">
    <property type="entry name" value="RHOD_YceA"/>
    <property type="match status" value="1"/>
</dbReference>
<dbReference type="Gene3D" id="3.30.70.100">
    <property type="match status" value="1"/>
</dbReference>
<dbReference type="Gene3D" id="3.40.250.10">
    <property type="entry name" value="Rhodanese-like domain"/>
    <property type="match status" value="1"/>
</dbReference>
<dbReference type="HAMAP" id="MF_00469">
    <property type="entry name" value="TrhO"/>
    <property type="match status" value="1"/>
</dbReference>
<dbReference type="InterPro" id="IPR001763">
    <property type="entry name" value="Rhodanese-like_dom"/>
</dbReference>
<dbReference type="InterPro" id="IPR036873">
    <property type="entry name" value="Rhodanese-like_dom_sf"/>
</dbReference>
<dbReference type="InterPro" id="IPR020936">
    <property type="entry name" value="TrhO"/>
</dbReference>
<dbReference type="InterPro" id="IPR040503">
    <property type="entry name" value="TRHO_N"/>
</dbReference>
<dbReference type="NCBIfam" id="NF001136">
    <property type="entry name" value="PRK00142.1-4"/>
    <property type="match status" value="1"/>
</dbReference>
<dbReference type="PANTHER" id="PTHR43268:SF3">
    <property type="entry name" value="RHODANESE-LIKE DOMAIN-CONTAINING PROTEIN 7-RELATED"/>
    <property type="match status" value="1"/>
</dbReference>
<dbReference type="PANTHER" id="PTHR43268">
    <property type="entry name" value="THIOSULFATE SULFURTRANSFERASE/RHODANESE-LIKE DOMAIN-CONTAINING PROTEIN 2"/>
    <property type="match status" value="1"/>
</dbReference>
<dbReference type="Pfam" id="PF00581">
    <property type="entry name" value="Rhodanese"/>
    <property type="match status" value="1"/>
</dbReference>
<dbReference type="Pfam" id="PF17773">
    <property type="entry name" value="UPF0176_N"/>
    <property type="match status" value="1"/>
</dbReference>
<dbReference type="SMART" id="SM00450">
    <property type="entry name" value="RHOD"/>
    <property type="match status" value="1"/>
</dbReference>
<dbReference type="SUPFAM" id="SSF52821">
    <property type="entry name" value="Rhodanese/Cell cycle control phosphatase"/>
    <property type="match status" value="1"/>
</dbReference>
<dbReference type="PROSITE" id="PS50206">
    <property type="entry name" value="RHODANESE_3"/>
    <property type="match status" value="1"/>
</dbReference>
<feature type="chain" id="PRO_1000013793" description="tRNA uridine(34) hydroxylase">
    <location>
        <begin position="1"/>
        <end position="326"/>
    </location>
</feature>
<feature type="domain" description="Rhodanese" evidence="1">
    <location>
        <begin position="123"/>
        <end position="217"/>
    </location>
</feature>
<feature type="region of interest" description="Disordered" evidence="2">
    <location>
        <begin position="293"/>
        <end position="326"/>
    </location>
</feature>
<feature type="compositionally biased region" description="Basic and acidic residues" evidence="2">
    <location>
        <begin position="311"/>
        <end position="326"/>
    </location>
</feature>
<feature type="active site" description="Cysteine persulfide intermediate" evidence="1">
    <location>
        <position position="177"/>
    </location>
</feature>
<comment type="function">
    <text evidence="1">Catalyzes oxygen-dependent 5-hydroxyuridine (ho5U) modification at position 34 in tRNAs.</text>
</comment>
<comment type="catalytic activity">
    <reaction evidence="1">
        <text>uridine(34) in tRNA + AH2 + O2 = 5-hydroxyuridine(34) in tRNA + A + H2O</text>
        <dbReference type="Rhea" id="RHEA:64224"/>
        <dbReference type="Rhea" id="RHEA-COMP:11727"/>
        <dbReference type="Rhea" id="RHEA-COMP:13381"/>
        <dbReference type="ChEBI" id="CHEBI:13193"/>
        <dbReference type="ChEBI" id="CHEBI:15377"/>
        <dbReference type="ChEBI" id="CHEBI:15379"/>
        <dbReference type="ChEBI" id="CHEBI:17499"/>
        <dbReference type="ChEBI" id="CHEBI:65315"/>
        <dbReference type="ChEBI" id="CHEBI:136877"/>
    </reaction>
</comment>
<comment type="similarity">
    <text evidence="1">Belongs to the TrhO family.</text>
</comment>
<reference key="1">
    <citation type="submission" date="2007-08" db="EMBL/GenBank/DDBJ databases">
        <authorList>
            <consortium name="The Vibrio harveyi Genome Sequencing Project"/>
            <person name="Bassler B."/>
            <person name="Clifton S.W."/>
            <person name="Fulton L."/>
            <person name="Delehaunty K."/>
            <person name="Fronick C."/>
            <person name="Harrison M."/>
            <person name="Markivic C."/>
            <person name="Fulton R."/>
            <person name="Tin-Wollam A.-M."/>
            <person name="Shah N."/>
            <person name="Pepin K."/>
            <person name="Nash W."/>
            <person name="Thiruvilangam P."/>
            <person name="Bhonagiri V."/>
            <person name="Waters C."/>
            <person name="Tu K.C."/>
            <person name="Irgon J."/>
            <person name="Wilson R.K."/>
        </authorList>
    </citation>
    <scope>NUCLEOTIDE SEQUENCE [LARGE SCALE GENOMIC DNA]</scope>
    <source>
        <strain>ATCC BAA-1116 / BB120</strain>
    </source>
</reference>